<reference key="1">
    <citation type="journal article" date="2006" name="Appl. Environ. Microbiol.">
        <title>Complete genome sequence of the marine, chemolithoautotrophic, ammonia-oxidizing bacterium Nitrosococcus oceani ATCC 19707.</title>
        <authorList>
            <person name="Klotz M.G."/>
            <person name="Arp D.J."/>
            <person name="Chain P.S.G."/>
            <person name="El-Sheikh A.F."/>
            <person name="Hauser L.J."/>
            <person name="Hommes N.G."/>
            <person name="Larimer F.W."/>
            <person name="Malfatti S.A."/>
            <person name="Norton J.M."/>
            <person name="Poret-Peterson A.T."/>
            <person name="Vergez L.M."/>
            <person name="Ward B.B."/>
        </authorList>
    </citation>
    <scope>NUCLEOTIDE SEQUENCE [LARGE SCALE GENOMIC DNA]</scope>
    <source>
        <strain>ATCC 19707 / BCRC 17464 / JCM 30415 / NCIMB 11848 / C-107</strain>
    </source>
</reference>
<name>PUR9_NITOC</name>
<accession>Q3JC90</accession>
<comment type="catalytic activity">
    <reaction evidence="1">
        <text>(6R)-10-formyltetrahydrofolate + 5-amino-1-(5-phospho-beta-D-ribosyl)imidazole-4-carboxamide = 5-formamido-1-(5-phospho-D-ribosyl)imidazole-4-carboxamide + (6S)-5,6,7,8-tetrahydrofolate</text>
        <dbReference type="Rhea" id="RHEA:22192"/>
        <dbReference type="ChEBI" id="CHEBI:57453"/>
        <dbReference type="ChEBI" id="CHEBI:58467"/>
        <dbReference type="ChEBI" id="CHEBI:58475"/>
        <dbReference type="ChEBI" id="CHEBI:195366"/>
        <dbReference type="EC" id="2.1.2.3"/>
    </reaction>
</comment>
<comment type="catalytic activity">
    <reaction evidence="1">
        <text>IMP + H2O = 5-formamido-1-(5-phospho-D-ribosyl)imidazole-4-carboxamide</text>
        <dbReference type="Rhea" id="RHEA:18445"/>
        <dbReference type="ChEBI" id="CHEBI:15377"/>
        <dbReference type="ChEBI" id="CHEBI:58053"/>
        <dbReference type="ChEBI" id="CHEBI:58467"/>
        <dbReference type="EC" id="3.5.4.10"/>
    </reaction>
</comment>
<comment type="pathway">
    <text evidence="1">Purine metabolism; IMP biosynthesis via de novo pathway; 5-formamido-1-(5-phospho-D-ribosyl)imidazole-4-carboxamide from 5-amino-1-(5-phospho-D-ribosyl)imidazole-4-carboxamide (10-formyl THF route): step 1/1.</text>
</comment>
<comment type="pathway">
    <text evidence="1">Purine metabolism; IMP biosynthesis via de novo pathway; IMP from 5-formamido-1-(5-phospho-D-ribosyl)imidazole-4-carboxamide: step 1/1.</text>
</comment>
<comment type="domain">
    <text evidence="1">The IMP cyclohydrolase activity resides in the N-terminal region.</text>
</comment>
<comment type="similarity">
    <text evidence="1">Belongs to the PurH family.</text>
</comment>
<feature type="chain" id="PRO_1000057900" description="Bifunctional purine biosynthesis protein PurH">
    <location>
        <begin position="1"/>
        <end position="522"/>
    </location>
</feature>
<feature type="domain" description="MGS-like" evidence="2">
    <location>
        <begin position="1"/>
        <end position="145"/>
    </location>
</feature>
<sequence length="522" mass="56313">MKPIARALISVSDKTGIVPFAHRLQARGVKILSTGGSAQLLQKNNIGATEISTYTGFPEMMGGRIKTLHPKIHGGILGRRETDATTMAEYNIAPIDLVAVNLYPFEQTVAKPDCDLATAIENIDIGGPTLLRAAAKNHAAVTVIVDPDDYERVLREMEANGGALSSSTRFELAVKSFEHTARYDATIANYLGALTPNGEKSAFPRSYNIQFAKKQEMRYGENPHQRAAFYVEQPPPAGTIATAQQLQGKTLSFNNIADTDAALACVKAFREAPTCVIVKHANPCGVATGINLQEAYERAYAADPVSAFGGIIAFNEPLDPTTAKTIIKRQFAEVIIAPAVTTTAQEILTSKPNIRVLACGEWSSQTAAGWDYKRIVGGLLLQDQDTDTVPLEALQTVTERSPTPQELKDLLFAWQVVKFVKSNAIVYAKNGRTIGVGAGQTSRVMSSQIAELKAKEAGFSTQNAVLASDAFFPFRDGLEAAAKAGICAVIQPGGSRRDKEVIAAANEWDMAMLFTGMRHFRH</sequence>
<evidence type="ECO:0000255" key="1">
    <source>
        <dbReference type="HAMAP-Rule" id="MF_00139"/>
    </source>
</evidence>
<evidence type="ECO:0000255" key="2">
    <source>
        <dbReference type="PROSITE-ProRule" id="PRU01202"/>
    </source>
</evidence>
<gene>
    <name evidence="1" type="primary">purH</name>
    <name type="ordered locus">Noc_1048</name>
</gene>
<organism>
    <name type="scientific">Nitrosococcus oceani (strain ATCC 19707 / BCRC 17464 / JCM 30415 / NCIMB 11848 / C-107)</name>
    <dbReference type="NCBI Taxonomy" id="323261"/>
    <lineage>
        <taxon>Bacteria</taxon>
        <taxon>Pseudomonadati</taxon>
        <taxon>Pseudomonadota</taxon>
        <taxon>Gammaproteobacteria</taxon>
        <taxon>Chromatiales</taxon>
        <taxon>Chromatiaceae</taxon>
        <taxon>Nitrosococcus</taxon>
    </lineage>
</organism>
<protein>
    <recommendedName>
        <fullName evidence="1">Bifunctional purine biosynthesis protein PurH</fullName>
    </recommendedName>
    <domain>
        <recommendedName>
            <fullName evidence="1">Phosphoribosylaminoimidazolecarboxamide formyltransferase</fullName>
            <ecNumber evidence="1">2.1.2.3</ecNumber>
        </recommendedName>
        <alternativeName>
            <fullName evidence="1">AICAR transformylase</fullName>
        </alternativeName>
    </domain>
    <domain>
        <recommendedName>
            <fullName evidence="1">IMP cyclohydrolase</fullName>
            <ecNumber evidence="1">3.5.4.10</ecNumber>
        </recommendedName>
        <alternativeName>
            <fullName evidence="1">ATIC</fullName>
        </alternativeName>
        <alternativeName>
            <fullName evidence="1">IMP synthase</fullName>
        </alternativeName>
        <alternativeName>
            <fullName evidence="1">Inosinicase</fullName>
        </alternativeName>
    </domain>
</protein>
<keyword id="KW-0378">Hydrolase</keyword>
<keyword id="KW-0511">Multifunctional enzyme</keyword>
<keyword id="KW-0658">Purine biosynthesis</keyword>
<keyword id="KW-1185">Reference proteome</keyword>
<keyword id="KW-0808">Transferase</keyword>
<proteinExistence type="inferred from homology"/>
<dbReference type="EC" id="2.1.2.3" evidence="1"/>
<dbReference type="EC" id="3.5.4.10" evidence="1"/>
<dbReference type="EMBL" id="CP000127">
    <property type="protein sequence ID" value="ABA57556.1"/>
    <property type="molecule type" value="Genomic_DNA"/>
</dbReference>
<dbReference type="RefSeq" id="WP_002811435.1">
    <property type="nucleotide sequence ID" value="NC_007484.1"/>
</dbReference>
<dbReference type="SMR" id="Q3JC90"/>
<dbReference type="FunCoup" id="Q3JC90">
    <property type="interactions" value="529"/>
</dbReference>
<dbReference type="STRING" id="323261.Noc_1048"/>
<dbReference type="KEGG" id="noc:Noc_1048"/>
<dbReference type="eggNOG" id="COG0138">
    <property type="taxonomic scope" value="Bacteria"/>
</dbReference>
<dbReference type="HOGENOM" id="CLU_016316_5_2_6"/>
<dbReference type="InParanoid" id="Q3JC90"/>
<dbReference type="UniPathway" id="UPA00074">
    <property type="reaction ID" value="UER00133"/>
</dbReference>
<dbReference type="UniPathway" id="UPA00074">
    <property type="reaction ID" value="UER00135"/>
</dbReference>
<dbReference type="Proteomes" id="UP000006838">
    <property type="component" value="Chromosome"/>
</dbReference>
<dbReference type="GO" id="GO:0005829">
    <property type="term" value="C:cytosol"/>
    <property type="evidence" value="ECO:0007669"/>
    <property type="project" value="TreeGrafter"/>
</dbReference>
<dbReference type="GO" id="GO:0003937">
    <property type="term" value="F:IMP cyclohydrolase activity"/>
    <property type="evidence" value="ECO:0007669"/>
    <property type="project" value="UniProtKB-UniRule"/>
</dbReference>
<dbReference type="GO" id="GO:0004643">
    <property type="term" value="F:phosphoribosylaminoimidazolecarboxamide formyltransferase activity"/>
    <property type="evidence" value="ECO:0007669"/>
    <property type="project" value="UniProtKB-UniRule"/>
</dbReference>
<dbReference type="GO" id="GO:0006189">
    <property type="term" value="P:'de novo' IMP biosynthetic process"/>
    <property type="evidence" value="ECO:0007669"/>
    <property type="project" value="UniProtKB-UniRule"/>
</dbReference>
<dbReference type="CDD" id="cd01421">
    <property type="entry name" value="IMPCH"/>
    <property type="match status" value="1"/>
</dbReference>
<dbReference type="FunFam" id="3.40.140.20:FF:000001">
    <property type="entry name" value="Bifunctional purine biosynthesis protein PurH"/>
    <property type="match status" value="1"/>
</dbReference>
<dbReference type="FunFam" id="3.40.140.20:FF:000002">
    <property type="entry name" value="Bifunctional purine biosynthesis protein PurH"/>
    <property type="match status" value="1"/>
</dbReference>
<dbReference type="FunFam" id="3.40.50.1380:FF:000001">
    <property type="entry name" value="Bifunctional purine biosynthesis protein PurH"/>
    <property type="match status" value="1"/>
</dbReference>
<dbReference type="Gene3D" id="3.40.140.20">
    <property type="match status" value="2"/>
</dbReference>
<dbReference type="Gene3D" id="3.40.50.1380">
    <property type="entry name" value="Methylglyoxal synthase-like domain"/>
    <property type="match status" value="1"/>
</dbReference>
<dbReference type="HAMAP" id="MF_00139">
    <property type="entry name" value="PurH"/>
    <property type="match status" value="1"/>
</dbReference>
<dbReference type="InterPro" id="IPR024051">
    <property type="entry name" value="AICAR_Tfase_dup_dom_sf"/>
</dbReference>
<dbReference type="InterPro" id="IPR016193">
    <property type="entry name" value="Cytidine_deaminase-like"/>
</dbReference>
<dbReference type="InterPro" id="IPR011607">
    <property type="entry name" value="MGS-like_dom"/>
</dbReference>
<dbReference type="InterPro" id="IPR036914">
    <property type="entry name" value="MGS-like_dom_sf"/>
</dbReference>
<dbReference type="InterPro" id="IPR002695">
    <property type="entry name" value="PurH-like"/>
</dbReference>
<dbReference type="NCBIfam" id="NF002049">
    <property type="entry name" value="PRK00881.1"/>
    <property type="match status" value="1"/>
</dbReference>
<dbReference type="NCBIfam" id="TIGR00355">
    <property type="entry name" value="purH"/>
    <property type="match status" value="1"/>
</dbReference>
<dbReference type="PANTHER" id="PTHR11692:SF0">
    <property type="entry name" value="BIFUNCTIONAL PURINE BIOSYNTHESIS PROTEIN ATIC"/>
    <property type="match status" value="1"/>
</dbReference>
<dbReference type="PANTHER" id="PTHR11692">
    <property type="entry name" value="BIFUNCTIONAL PURINE BIOSYNTHESIS PROTEIN PURH"/>
    <property type="match status" value="1"/>
</dbReference>
<dbReference type="Pfam" id="PF01808">
    <property type="entry name" value="AICARFT_IMPCHas"/>
    <property type="match status" value="1"/>
</dbReference>
<dbReference type="Pfam" id="PF02142">
    <property type="entry name" value="MGS"/>
    <property type="match status" value="1"/>
</dbReference>
<dbReference type="PIRSF" id="PIRSF000414">
    <property type="entry name" value="AICARFT_IMPCHas"/>
    <property type="match status" value="1"/>
</dbReference>
<dbReference type="SMART" id="SM00798">
    <property type="entry name" value="AICARFT_IMPCHas"/>
    <property type="match status" value="1"/>
</dbReference>
<dbReference type="SMART" id="SM00851">
    <property type="entry name" value="MGS"/>
    <property type="match status" value="1"/>
</dbReference>
<dbReference type="SUPFAM" id="SSF53927">
    <property type="entry name" value="Cytidine deaminase-like"/>
    <property type="match status" value="1"/>
</dbReference>
<dbReference type="SUPFAM" id="SSF52335">
    <property type="entry name" value="Methylglyoxal synthase-like"/>
    <property type="match status" value="1"/>
</dbReference>
<dbReference type="PROSITE" id="PS51855">
    <property type="entry name" value="MGS"/>
    <property type="match status" value="1"/>
</dbReference>